<name>PYRK_ENTFO</name>
<reference key="1">
    <citation type="journal article" date="2008" name="Genome Biol.">
        <title>Large scale variation in Enterococcus faecalis illustrated by the genome analysis of strain OG1RF.</title>
        <authorList>
            <person name="Bourgogne A."/>
            <person name="Garsin D.A."/>
            <person name="Qin X."/>
            <person name="Singh K.V."/>
            <person name="Sillanpaa J."/>
            <person name="Yerrapragada S."/>
            <person name="Ding Y."/>
            <person name="Dugan-Rocha S."/>
            <person name="Buhay C."/>
            <person name="Shen H."/>
            <person name="Chen G."/>
            <person name="Williams G."/>
            <person name="Muzny D."/>
            <person name="Maadani A."/>
            <person name="Fox K.A."/>
            <person name="Gioia J."/>
            <person name="Chen L."/>
            <person name="Shang Y."/>
            <person name="Arias C.A."/>
            <person name="Nallapareddy S.R."/>
            <person name="Zhao M."/>
            <person name="Prakash V.P."/>
            <person name="Chowdhury S."/>
            <person name="Jiang H."/>
            <person name="Gibbs R.A."/>
            <person name="Murray B.E."/>
            <person name="Highlander S.K."/>
            <person name="Weinstock G.M."/>
        </authorList>
    </citation>
    <scope>NUCLEOTIDE SEQUENCE [LARGE SCALE GENOMIC DNA]</scope>
    <source>
        <strain>ATCC 47077 / OG1RF</strain>
    </source>
</reference>
<reference key="2">
    <citation type="journal article" date="1995" name="J. Bacteriol.">
        <title>Generation of auxotrophic mutants of Enterococcus faecalis.</title>
        <authorList>
            <person name="Li X."/>
            <person name="Weinstock G.M."/>
            <person name="Murray B.E."/>
        </authorList>
    </citation>
    <scope>NUCLEOTIDE SEQUENCE [GENOMIC DNA] OF 189-263</scope>
    <source>
        <strain>ATCC 47077 / OG1RF</strain>
    </source>
</reference>
<feature type="chain" id="PRO_0000412180" description="Dihydroorotate dehydrogenase B (NAD(+)), electron transfer subunit">
    <location>
        <begin position="1"/>
        <end position="263"/>
    </location>
</feature>
<feature type="domain" description="FAD-binding FR-type">
    <location>
        <begin position="3"/>
        <end position="102"/>
    </location>
</feature>
<feature type="binding site" evidence="1">
    <location>
        <begin position="53"/>
        <end position="56"/>
    </location>
    <ligand>
        <name>FAD</name>
        <dbReference type="ChEBI" id="CHEBI:57692"/>
    </ligand>
</feature>
<feature type="binding site" evidence="1">
    <location>
        <begin position="70"/>
        <end position="72"/>
    </location>
    <ligand>
        <name>FAD</name>
        <dbReference type="ChEBI" id="CHEBI:57692"/>
    </ligand>
</feature>
<feature type="binding site" evidence="1">
    <location>
        <begin position="77"/>
        <end position="78"/>
    </location>
    <ligand>
        <name>FAD</name>
        <dbReference type="ChEBI" id="CHEBI:57692"/>
    </ligand>
</feature>
<feature type="binding site" evidence="1">
    <location>
        <position position="225"/>
    </location>
    <ligand>
        <name>[2Fe-2S] cluster</name>
        <dbReference type="ChEBI" id="CHEBI:190135"/>
    </ligand>
</feature>
<feature type="binding site" evidence="1">
    <location>
        <position position="230"/>
    </location>
    <ligand>
        <name>[2Fe-2S] cluster</name>
        <dbReference type="ChEBI" id="CHEBI:190135"/>
    </ligand>
</feature>
<feature type="binding site" evidence="1">
    <location>
        <position position="233"/>
    </location>
    <ligand>
        <name>[2Fe-2S] cluster</name>
        <dbReference type="ChEBI" id="CHEBI:190135"/>
    </ligand>
</feature>
<feature type="binding site" evidence="1">
    <location>
        <position position="250"/>
    </location>
    <ligand>
        <name>[2Fe-2S] cluster</name>
        <dbReference type="ChEBI" id="CHEBI:190135"/>
    </ligand>
</feature>
<evidence type="ECO:0000250" key="1"/>
<evidence type="ECO:0000305" key="2"/>
<organism>
    <name type="scientific">Enterococcus faecalis (strain ATCC 47077 / OG1RF)</name>
    <dbReference type="NCBI Taxonomy" id="474186"/>
    <lineage>
        <taxon>Bacteria</taxon>
        <taxon>Bacillati</taxon>
        <taxon>Bacillota</taxon>
        <taxon>Bacilli</taxon>
        <taxon>Lactobacillales</taxon>
        <taxon>Enterococcaceae</taxon>
        <taxon>Enterococcus</taxon>
    </lineage>
</organism>
<protein>
    <recommendedName>
        <fullName>Dihydroorotate dehydrogenase B (NAD(+)), electron transfer subunit</fullName>
    </recommendedName>
    <alternativeName>
        <fullName>Dihydroorotate oxidase B, electron transfer subunit</fullName>
    </alternativeName>
</protein>
<sequence length="263" mass="28558">MQRKQEMMTIVAQKQLAPRIYQLDLQGELVKDMTRPGQFVHIKVPRADLLLRRPISINQIDHSNETCRLIYRVEGAGTEVFATMKAGEQLDILGPLGNGFDITTVAAGQTAFIVGGGIGIPPLYELSKQLNEKGVKVIHFLGYASKEVAYYQQEFMALGETHFATDDGSFGAHGNVGRLLSEALAKGRIPDAVYACGANGMLKAIDSLFPTHPHVYLSLEERMACGIGACYACVCHKKGDTTGAKSVKVCDEGPIFKASEVIL</sequence>
<keyword id="KW-0001">2Fe-2S</keyword>
<keyword id="KW-0249">Electron transport</keyword>
<keyword id="KW-0274">FAD</keyword>
<keyword id="KW-0285">Flavoprotein</keyword>
<keyword id="KW-0408">Iron</keyword>
<keyword id="KW-0411">Iron-sulfur</keyword>
<keyword id="KW-0479">Metal-binding</keyword>
<keyword id="KW-0665">Pyrimidine biosynthesis</keyword>
<keyword id="KW-0813">Transport</keyword>
<comment type="function">
    <text evidence="1">Responsible for channeling the electrons from the oxidation of dihydroorotate from the FMN redox center in the PyrD type B subunit to the ultimate electron acceptor NAD(+).</text>
</comment>
<comment type="cofactor">
    <cofactor evidence="1">
        <name>[2Fe-2S] cluster</name>
        <dbReference type="ChEBI" id="CHEBI:190135"/>
    </cofactor>
    <text evidence="1">Binds 1 [2Fe-2S] cluster per subunit.</text>
</comment>
<comment type="cofactor">
    <cofactor evidence="1">
        <name>FAD</name>
        <dbReference type="ChEBI" id="CHEBI:57692"/>
    </cofactor>
    <text evidence="1">Binds 1 FAD per subunit.</text>
</comment>
<comment type="pathway">
    <text>Pyrimidine metabolism; UMP biosynthesis via de novo pathway; orotate from (S)-dihydroorotate (NAD(+) route): step 1/1.</text>
</comment>
<comment type="subunit">
    <text>Heterotetramer of 2 PyrK and 2 PyrD type B subunits.</text>
</comment>
<comment type="similarity">
    <text evidence="2">Belongs to the PyrK family.</text>
</comment>
<proteinExistence type="inferred from homology"/>
<dbReference type="EMBL" id="CP002621">
    <property type="protein sequence ID" value="AEA94113.1"/>
    <property type="molecule type" value="Genomic_DNA"/>
</dbReference>
<dbReference type="EMBL" id="U24692">
    <property type="status" value="NOT_ANNOTATED_CDS"/>
    <property type="molecule type" value="Genomic_DNA"/>
</dbReference>
<dbReference type="RefSeq" id="WP_002380354.1">
    <property type="nucleotide sequence ID" value="NZ_JAWXYD010000001.1"/>
</dbReference>
<dbReference type="SMR" id="F2MMP0"/>
<dbReference type="KEGG" id="efi:OG1RF_11426"/>
<dbReference type="HOGENOM" id="CLU_003827_1_2_9"/>
<dbReference type="UniPathway" id="UPA00070">
    <property type="reaction ID" value="UER00945"/>
</dbReference>
<dbReference type="GO" id="GO:0051537">
    <property type="term" value="F:2 iron, 2 sulfur cluster binding"/>
    <property type="evidence" value="ECO:0007669"/>
    <property type="project" value="UniProtKB-KW"/>
</dbReference>
<dbReference type="GO" id="GO:0009055">
    <property type="term" value="F:electron transfer activity"/>
    <property type="evidence" value="ECO:0007669"/>
    <property type="project" value="UniProtKB-UniRule"/>
</dbReference>
<dbReference type="GO" id="GO:0050660">
    <property type="term" value="F:flavin adenine dinucleotide binding"/>
    <property type="evidence" value="ECO:0007669"/>
    <property type="project" value="InterPro"/>
</dbReference>
<dbReference type="GO" id="GO:0046872">
    <property type="term" value="F:metal ion binding"/>
    <property type="evidence" value="ECO:0007669"/>
    <property type="project" value="UniProtKB-KW"/>
</dbReference>
<dbReference type="GO" id="GO:0016491">
    <property type="term" value="F:oxidoreductase activity"/>
    <property type="evidence" value="ECO:0007669"/>
    <property type="project" value="InterPro"/>
</dbReference>
<dbReference type="GO" id="GO:0044205">
    <property type="term" value="P:'de novo' UMP biosynthetic process"/>
    <property type="evidence" value="ECO:0007669"/>
    <property type="project" value="UniProtKB-UniRule"/>
</dbReference>
<dbReference type="CDD" id="cd06218">
    <property type="entry name" value="DHOD_e_trans"/>
    <property type="match status" value="1"/>
</dbReference>
<dbReference type="Gene3D" id="2.10.240.10">
    <property type="entry name" value="Dihydroorotate dehydrogenase, electron transfer subunit"/>
    <property type="match status" value="1"/>
</dbReference>
<dbReference type="Gene3D" id="3.40.50.80">
    <property type="entry name" value="Nucleotide-binding domain of ferredoxin-NADP reductase (FNR) module"/>
    <property type="match status" value="1"/>
</dbReference>
<dbReference type="Gene3D" id="2.40.30.10">
    <property type="entry name" value="Translation factors"/>
    <property type="match status" value="1"/>
</dbReference>
<dbReference type="HAMAP" id="MF_01211">
    <property type="entry name" value="DHODB_Fe_S_bind"/>
    <property type="match status" value="1"/>
</dbReference>
<dbReference type="InterPro" id="IPR008333">
    <property type="entry name" value="Cbr1-like_FAD-bd_dom"/>
</dbReference>
<dbReference type="InterPro" id="IPR012165">
    <property type="entry name" value="Cyt_c3_hydrogenase_gsu"/>
</dbReference>
<dbReference type="InterPro" id="IPR037117">
    <property type="entry name" value="Dihydroorotate_DH_ele_sf"/>
</dbReference>
<dbReference type="InterPro" id="IPR019480">
    <property type="entry name" value="Dihydroorotate_DH_Fe-S-bd"/>
</dbReference>
<dbReference type="InterPro" id="IPR023455">
    <property type="entry name" value="Dihydroorotate_DHASE_ETsu"/>
</dbReference>
<dbReference type="InterPro" id="IPR017927">
    <property type="entry name" value="FAD-bd_FR_type"/>
</dbReference>
<dbReference type="InterPro" id="IPR039261">
    <property type="entry name" value="FNR_nucleotide-bd"/>
</dbReference>
<dbReference type="InterPro" id="IPR050353">
    <property type="entry name" value="PyrK_electron_transfer"/>
</dbReference>
<dbReference type="InterPro" id="IPR017938">
    <property type="entry name" value="Riboflavin_synthase-like_b-brl"/>
</dbReference>
<dbReference type="NCBIfam" id="NF000797">
    <property type="entry name" value="PRK00054.1-2"/>
    <property type="match status" value="1"/>
</dbReference>
<dbReference type="NCBIfam" id="NF000799">
    <property type="entry name" value="PRK00054.1-4"/>
    <property type="match status" value="1"/>
</dbReference>
<dbReference type="PANTHER" id="PTHR43513">
    <property type="entry name" value="DIHYDROOROTATE DEHYDROGENASE B (NAD(+)), ELECTRON TRANSFER SUBUNIT"/>
    <property type="match status" value="1"/>
</dbReference>
<dbReference type="PANTHER" id="PTHR43513:SF3">
    <property type="entry name" value="DIHYDROOROTATE DEHYDROGENASE B (NAD(+)), ELECTRON TRANSFER SUBUNIT-RELATED"/>
    <property type="match status" value="1"/>
</dbReference>
<dbReference type="Pfam" id="PF10418">
    <property type="entry name" value="DHODB_Fe-S_bind"/>
    <property type="match status" value="1"/>
</dbReference>
<dbReference type="Pfam" id="PF00970">
    <property type="entry name" value="FAD_binding_6"/>
    <property type="match status" value="1"/>
</dbReference>
<dbReference type="PIRSF" id="PIRSF006816">
    <property type="entry name" value="Cyc3_hyd_g"/>
    <property type="match status" value="1"/>
</dbReference>
<dbReference type="SUPFAM" id="SSF52343">
    <property type="entry name" value="Ferredoxin reductase-like, C-terminal NADP-linked domain"/>
    <property type="match status" value="1"/>
</dbReference>
<dbReference type="SUPFAM" id="SSF63380">
    <property type="entry name" value="Riboflavin synthase domain-like"/>
    <property type="match status" value="1"/>
</dbReference>
<dbReference type="PROSITE" id="PS51384">
    <property type="entry name" value="FAD_FR"/>
    <property type="match status" value="1"/>
</dbReference>
<gene>
    <name type="primary">pyrK</name>
    <name type="synonym">pyrDII</name>
    <name type="ordered locus">OG1RF_11426</name>
</gene>
<accession>F2MMP0</accession>
<accession>P56967</accession>